<keyword id="KW-0903">Direct protein sequencing</keyword>
<keyword id="KW-0555">Opioid peptide</keyword>
<dbReference type="GO" id="GO:0001515">
    <property type="term" value="F:opioid peptide activity"/>
    <property type="evidence" value="ECO:0000314"/>
    <property type="project" value="UniProtKB"/>
</dbReference>
<dbReference type="GO" id="GO:0051930">
    <property type="term" value="P:regulation of sensory perception of pain"/>
    <property type="evidence" value="ECO:0000314"/>
    <property type="project" value="UniProtKB"/>
</dbReference>
<proteinExistence type="evidence at protein level"/>
<evidence type="ECO:0000269" key="1">
    <source>
    </source>
</evidence>
<evidence type="ECO:0000305" key="2"/>
<reference evidence="2" key="1">
    <citation type="journal article" date="2005" name="Peptides">
        <title>An opioid peptide from synganglia of the tick, Amblyomma testindinarium.</title>
        <authorList>
            <person name="Liang J.-G."/>
            <person name="Zhang J."/>
            <person name="Lai R."/>
            <person name="Rees H.H."/>
        </authorList>
    </citation>
    <scope>PROTEIN SEQUENCE</scope>
    <scope>TISSUE SPECIFICITY</scope>
    <scope>MASS SPECTROMETRY</scope>
    <source>
        <tissue evidence="1">CNS</tissue>
    </source>
</reference>
<accession>P84814</accession>
<sequence>LVVYPWTKM</sequence>
<comment type="function">
    <text evidence="1">Has opiate-like activity. Decreases nociception-related behavior in a dose dependent fashion when administered to mice. May play a role in down-regulating the host defense and immune response during feeding.</text>
</comment>
<comment type="tissue specificity">
    <text evidence="1">Expressed in the synganglia (at protein level).</text>
</comment>
<comment type="mass spectrometry"/>
<name>OPIP1_AMBTS</name>
<organism>
    <name type="scientific">Amblyomma testudinarium</name>
    <name type="common">Hard tick</name>
    <dbReference type="NCBI Taxonomy" id="375577"/>
    <lineage>
        <taxon>Eukaryota</taxon>
        <taxon>Metazoa</taxon>
        <taxon>Ecdysozoa</taxon>
        <taxon>Arthropoda</taxon>
        <taxon>Chelicerata</taxon>
        <taxon>Arachnida</taxon>
        <taxon>Acari</taxon>
        <taxon>Parasitiformes</taxon>
        <taxon>Ixodida</taxon>
        <taxon>Ixodoidea</taxon>
        <taxon>Ixodidae</taxon>
        <taxon>Amblyomminae</taxon>
        <taxon>Amblyomma</taxon>
    </lineage>
</organism>
<feature type="peptide" id="PRO_0000235909" description="Opioid peptide" evidence="1">
    <location>
        <begin position="1"/>
        <end position="9"/>
    </location>
</feature>
<protein>
    <recommendedName>
        <fullName>Opioid peptide</fullName>
    </recommendedName>
</protein>